<name>ERP2_YEAST</name>
<protein>
    <recommendedName>
        <fullName>Protein ERP2</fullName>
    </recommendedName>
</protein>
<sequence>MIKSTIALPSFFIVLILALVNSVAASSSYAPVAISLPAFSKECLYYDMVTEDDSLAVGYQVLTGGNFEIDFDITAPDGSVITSEKQKKYSDFLLKSFGVGKYTFCFSNNYGTALKKVEITLEKEKTLTDEHEADVNNDDIIANNAVEEIDRNLNKITKTLNYLRAREWRNMSTVNSTESRLTWLSILIIIIIAVISIAQVLLIQFLFTGRQKNYV</sequence>
<accession>P39704</accession>
<accession>D6VPL1</accession>
<evidence type="ECO:0000250" key="1"/>
<evidence type="ECO:0000255" key="2"/>
<evidence type="ECO:0000255" key="3">
    <source>
        <dbReference type="PROSITE-ProRule" id="PRU00096"/>
    </source>
</evidence>
<evidence type="ECO:0000269" key="4">
    <source>
    </source>
</evidence>
<evidence type="ECO:0000305" key="5"/>
<comment type="function">
    <text>Involved in vesicular protein trafficking.</text>
</comment>
<comment type="subunit">
    <text>Associates with EMP24, ERV25 and ERP1.</text>
</comment>
<comment type="interaction">
    <interactant intactId="EBI-6587">
        <id>P39704</id>
    </interactant>
    <interactant intactId="EBI-6431">
        <id>P32803</id>
        <label>EMP24</label>
    </interactant>
    <organismsDiffer>false</organismsDiffer>
    <experiments>4</experiments>
</comment>
<comment type="interaction">
    <interactant intactId="EBI-6587">
        <id>P39704</id>
    </interactant>
    <interactant intactId="EBI-6598">
        <id>Q12450</id>
        <label>ERP4</label>
    </interactant>
    <organismsDiffer>false</organismsDiffer>
    <experiments>3</experiments>
</comment>
<comment type="subcellular location">
    <subcellularLocation>
        <location evidence="1">Endoplasmic reticulum membrane</location>
        <topology evidence="1">Single-pass type I membrane protein</topology>
    </subcellularLocation>
</comment>
<comment type="miscellaneous">
    <text evidence="4">Present with 26300 molecules/cell in log phase SD medium.</text>
</comment>
<comment type="similarity">
    <text evidence="5">Belongs to the EMP24/GP25L family.</text>
</comment>
<organism>
    <name type="scientific">Saccharomyces cerevisiae (strain ATCC 204508 / S288c)</name>
    <name type="common">Baker's yeast</name>
    <dbReference type="NCBI Taxonomy" id="559292"/>
    <lineage>
        <taxon>Eukaryota</taxon>
        <taxon>Fungi</taxon>
        <taxon>Dikarya</taxon>
        <taxon>Ascomycota</taxon>
        <taxon>Saccharomycotina</taxon>
        <taxon>Saccharomycetes</taxon>
        <taxon>Saccharomycetales</taxon>
        <taxon>Saccharomycetaceae</taxon>
        <taxon>Saccharomyces</taxon>
    </lineage>
</organism>
<reference key="1">
    <citation type="journal article" date="1994" name="Yeast">
        <title>Sequencing of chromosome I of Saccharomyces cerevisiae: analysis of the 42 kbp SPO7-CENI-CDC15 region.</title>
        <authorList>
            <person name="Clark M.W."/>
            <person name="Keng T."/>
            <person name="Storms R.K."/>
            <person name="Zhong W.-W."/>
            <person name="Fortin N."/>
            <person name="Zeng B."/>
            <person name="Delaney S."/>
            <person name="Ouellette B.F.F."/>
            <person name="Barton A.B."/>
            <person name="Kaback D.B."/>
            <person name="Bussey H."/>
        </authorList>
    </citation>
    <scope>NUCLEOTIDE SEQUENCE [GENOMIC DNA]</scope>
    <source>
        <strain>ATCC 204511 / S288c / AB972</strain>
    </source>
</reference>
<reference key="2">
    <citation type="journal article" date="1995" name="Proc. Natl. Acad. Sci. U.S.A.">
        <title>The nucleotide sequence of chromosome I from Saccharomyces cerevisiae.</title>
        <authorList>
            <person name="Bussey H."/>
            <person name="Kaback D.B."/>
            <person name="Zhong W.-W."/>
            <person name="Vo D.H."/>
            <person name="Clark M.W."/>
            <person name="Fortin N."/>
            <person name="Hall J."/>
            <person name="Ouellette B.F.F."/>
            <person name="Keng T."/>
            <person name="Barton A.B."/>
            <person name="Su Y."/>
            <person name="Davies C.J."/>
            <person name="Storms R.K."/>
        </authorList>
    </citation>
    <scope>NUCLEOTIDE SEQUENCE [LARGE SCALE GENOMIC DNA]</scope>
    <source>
        <strain>ATCC 204508 / S288c</strain>
    </source>
</reference>
<reference key="3">
    <citation type="journal article" date="2014" name="G3 (Bethesda)">
        <title>The reference genome sequence of Saccharomyces cerevisiae: Then and now.</title>
        <authorList>
            <person name="Engel S.R."/>
            <person name="Dietrich F.S."/>
            <person name="Fisk D.G."/>
            <person name="Binkley G."/>
            <person name="Balakrishnan R."/>
            <person name="Costanzo M.C."/>
            <person name="Dwight S.S."/>
            <person name="Hitz B.C."/>
            <person name="Karra K."/>
            <person name="Nash R.S."/>
            <person name="Weng S."/>
            <person name="Wong E.D."/>
            <person name="Lloyd P."/>
            <person name="Skrzypek M.S."/>
            <person name="Miyasato S.R."/>
            <person name="Simison M."/>
            <person name="Cherry J.M."/>
        </authorList>
    </citation>
    <scope>GENOME REANNOTATION</scope>
    <source>
        <strain>ATCC 204508 / S288c</strain>
    </source>
</reference>
<reference key="4">
    <citation type="journal article" date="2007" name="Genome Res.">
        <title>Approaching a complete repository of sequence-verified protein-encoding clones for Saccharomyces cerevisiae.</title>
        <authorList>
            <person name="Hu Y."/>
            <person name="Rolfs A."/>
            <person name="Bhullar B."/>
            <person name="Murthy T.V.S."/>
            <person name="Zhu C."/>
            <person name="Berger M.F."/>
            <person name="Camargo A.A."/>
            <person name="Kelley F."/>
            <person name="McCarron S."/>
            <person name="Jepson D."/>
            <person name="Richardson A."/>
            <person name="Raphael J."/>
            <person name="Moreira D."/>
            <person name="Taycher E."/>
            <person name="Zuo D."/>
            <person name="Mohr S."/>
            <person name="Kane M.F."/>
            <person name="Williamson J."/>
            <person name="Simpson A.J.G."/>
            <person name="Bulyk M.L."/>
            <person name="Harlow E."/>
            <person name="Marsischky G."/>
            <person name="Kolodner R.D."/>
            <person name="LaBaer J."/>
        </authorList>
    </citation>
    <scope>NUCLEOTIDE SEQUENCE [GENOMIC DNA]</scope>
    <source>
        <strain>ATCC 204508 / S288c</strain>
    </source>
</reference>
<reference key="5">
    <citation type="journal article" date="1999" name="Mol. Biol. Cell">
        <title>Erp1p and Erp2p, partners for Emp24p and Erv25p in a yeast p24 complex.</title>
        <authorList>
            <person name="Marzioch M."/>
            <person name="Henthorn D.C."/>
            <person name="Herrmann J.M."/>
            <person name="Wilson R."/>
            <person name="Thomas D.Y."/>
            <person name="Bergeron J.J.M."/>
            <person name="Solari R.C."/>
            <person name="Rowley A."/>
        </authorList>
    </citation>
    <scope>CHARACTERIZATION</scope>
</reference>
<reference key="6">
    <citation type="journal article" date="2003" name="Nature">
        <title>Global analysis of protein expression in yeast.</title>
        <authorList>
            <person name="Ghaemmaghami S."/>
            <person name="Huh W.-K."/>
            <person name="Bower K."/>
            <person name="Howson R.W."/>
            <person name="Belle A."/>
            <person name="Dephoure N."/>
            <person name="O'Shea E.K."/>
            <person name="Weissman J.S."/>
        </authorList>
    </citation>
    <scope>LEVEL OF PROTEIN EXPRESSION [LARGE SCALE ANALYSIS]</scope>
</reference>
<reference key="7">
    <citation type="journal article" date="2006" name="Proc. Natl. Acad. Sci. U.S.A.">
        <title>A global topology map of the Saccharomyces cerevisiae membrane proteome.</title>
        <authorList>
            <person name="Kim H."/>
            <person name="Melen K."/>
            <person name="Oesterberg M."/>
            <person name="von Heijne G."/>
        </authorList>
    </citation>
    <scope>TOPOLOGY [LARGE SCALE ANALYSIS]</scope>
    <source>
        <strain>ATCC 208353 / W303-1A</strain>
    </source>
</reference>
<proteinExistence type="evidence at protein level"/>
<feature type="signal peptide" evidence="2">
    <location>
        <begin position="1"/>
        <end position="25"/>
    </location>
</feature>
<feature type="chain" id="PRO_0000010409" description="Protein ERP2">
    <location>
        <begin position="26"/>
        <end position="215"/>
    </location>
</feature>
<feature type="topological domain" description="Lumenal" evidence="2">
    <location>
        <begin position="26"/>
        <end position="182"/>
    </location>
</feature>
<feature type="transmembrane region" description="Helical" evidence="2">
    <location>
        <begin position="183"/>
        <end position="203"/>
    </location>
</feature>
<feature type="topological domain" description="Cytoplasmic" evidence="2">
    <location>
        <begin position="204"/>
        <end position="215"/>
    </location>
</feature>
<feature type="domain" description="GOLD" evidence="3">
    <location>
        <begin position="41"/>
        <end position="123"/>
    </location>
</feature>
<dbReference type="EMBL" id="L22015">
    <property type="protein sequence ID" value="AAC04951.1"/>
    <property type="molecule type" value="Genomic_DNA"/>
</dbReference>
<dbReference type="EMBL" id="AY558166">
    <property type="protein sequence ID" value="AAS56492.1"/>
    <property type="molecule type" value="Genomic_DNA"/>
</dbReference>
<dbReference type="EMBL" id="BK006935">
    <property type="protein sequence ID" value="DAA06981.1"/>
    <property type="molecule type" value="Genomic_DNA"/>
</dbReference>
<dbReference type="PIR" id="S43448">
    <property type="entry name" value="S43448"/>
</dbReference>
<dbReference type="RefSeq" id="NP_009395.1">
    <property type="nucleotide sequence ID" value="NM_001178152.1"/>
</dbReference>
<dbReference type="SMR" id="P39704"/>
<dbReference type="BioGRID" id="31759">
    <property type="interactions" value="162"/>
</dbReference>
<dbReference type="ComplexPortal" id="CPX-1698">
    <property type="entry name" value="EMP24 complex"/>
</dbReference>
<dbReference type="DIP" id="DIP-5808N"/>
<dbReference type="FunCoup" id="P39704">
    <property type="interactions" value="256"/>
</dbReference>
<dbReference type="IntAct" id="P39704">
    <property type="interactions" value="52"/>
</dbReference>
<dbReference type="MINT" id="P39704"/>
<dbReference type="STRING" id="4932.YAL007C"/>
<dbReference type="PaxDb" id="4932-YAL007C"/>
<dbReference type="PeptideAtlas" id="P39704"/>
<dbReference type="TopDownProteomics" id="P39704"/>
<dbReference type="EnsemblFungi" id="YAL007C_mRNA">
    <property type="protein sequence ID" value="YAL007C"/>
    <property type="gene ID" value="YAL007C"/>
</dbReference>
<dbReference type="GeneID" id="851226"/>
<dbReference type="KEGG" id="sce:YAL007C"/>
<dbReference type="AGR" id="SGD:S000000005"/>
<dbReference type="SGD" id="S000000005">
    <property type="gene designation" value="ERP2"/>
</dbReference>
<dbReference type="VEuPathDB" id="FungiDB:YAL007C"/>
<dbReference type="eggNOG" id="KOG1693">
    <property type="taxonomic scope" value="Eukaryota"/>
</dbReference>
<dbReference type="GeneTree" id="ENSGT00940000166069"/>
<dbReference type="HOGENOM" id="CLU_066963_4_2_1"/>
<dbReference type="InParanoid" id="P39704"/>
<dbReference type="OMA" id="GQDQEDW"/>
<dbReference type="OrthoDB" id="1929172at2759"/>
<dbReference type="BioCyc" id="YEAST:G3O-28820-MONOMER"/>
<dbReference type="Reactome" id="R-SCE-6807878">
    <property type="pathway name" value="COPI-mediated anterograde transport"/>
</dbReference>
<dbReference type="Reactome" id="R-SCE-6811434">
    <property type="pathway name" value="COPI-dependent Golgi-to-ER retrograde traffic"/>
</dbReference>
<dbReference type="BioGRID-ORCS" id="851226">
    <property type="hits" value="2 hits in 10 CRISPR screens"/>
</dbReference>
<dbReference type="PRO" id="PR:P39704"/>
<dbReference type="Proteomes" id="UP000002311">
    <property type="component" value="Chromosome I"/>
</dbReference>
<dbReference type="RNAct" id="P39704">
    <property type="molecule type" value="protein"/>
</dbReference>
<dbReference type="GO" id="GO:0030134">
    <property type="term" value="C:COPII-coated ER to Golgi transport vesicle"/>
    <property type="evidence" value="ECO:0000314"/>
    <property type="project" value="SGD"/>
</dbReference>
<dbReference type="GO" id="GO:0005783">
    <property type="term" value="C:endoplasmic reticulum"/>
    <property type="evidence" value="ECO:0007005"/>
    <property type="project" value="SGD"/>
</dbReference>
<dbReference type="GO" id="GO:0005789">
    <property type="term" value="C:endoplasmic reticulum membrane"/>
    <property type="evidence" value="ECO:0000303"/>
    <property type="project" value="ComplexPortal"/>
</dbReference>
<dbReference type="GO" id="GO:0005793">
    <property type="term" value="C:endoplasmic reticulum-Golgi intermediate compartment"/>
    <property type="evidence" value="ECO:0000318"/>
    <property type="project" value="GO_Central"/>
</dbReference>
<dbReference type="GO" id="GO:0005794">
    <property type="term" value="C:Golgi apparatus"/>
    <property type="evidence" value="ECO:0000318"/>
    <property type="project" value="GO_Central"/>
</dbReference>
<dbReference type="GO" id="GO:0005798">
    <property type="term" value="C:Golgi-associated vesicle"/>
    <property type="evidence" value="ECO:0000303"/>
    <property type="project" value="ComplexPortal"/>
</dbReference>
<dbReference type="GO" id="GO:0006888">
    <property type="term" value="P:endoplasmic reticulum to Golgi vesicle-mediated transport"/>
    <property type="evidence" value="ECO:0000315"/>
    <property type="project" value="SGD"/>
</dbReference>
<dbReference type="GO" id="GO:0007030">
    <property type="term" value="P:Golgi organization"/>
    <property type="evidence" value="ECO:0000318"/>
    <property type="project" value="GO_Central"/>
</dbReference>
<dbReference type="GO" id="GO:0006886">
    <property type="term" value="P:intracellular protein transport"/>
    <property type="evidence" value="ECO:0000318"/>
    <property type="project" value="GO_Central"/>
</dbReference>
<dbReference type="GO" id="GO:0006621">
    <property type="term" value="P:protein retention in ER lumen"/>
    <property type="evidence" value="ECO:0000315"/>
    <property type="project" value="SGD"/>
</dbReference>
<dbReference type="GO" id="GO:0006900">
    <property type="term" value="P:vesicle budding from membrane"/>
    <property type="evidence" value="ECO:0000303"/>
    <property type="project" value="ComplexPortal"/>
</dbReference>
<dbReference type="InterPro" id="IPR015720">
    <property type="entry name" value="Emp24-like"/>
</dbReference>
<dbReference type="InterPro" id="IPR009038">
    <property type="entry name" value="GOLD_dom"/>
</dbReference>
<dbReference type="InterPro" id="IPR036598">
    <property type="entry name" value="GOLD_dom_sf"/>
</dbReference>
<dbReference type="PANTHER" id="PTHR22811">
    <property type="entry name" value="TRANSMEMBRANE EMP24 DOMAIN-CONTAINING PROTEIN"/>
    <property type="match status" value="1"/>
</dbReference>
<dbReference type="Pfam" id="PF01105">
    <property type="entry name" value="EMP24_GP25L"/>
    <property type="match status" value="1"/>
</dbReference>
<dbReference type="SMART" id="SM01190">
    <property type="entry name" value="EMP24_GP25L"/>
    <property type="match status" value="1"/>
</dbReference>
<dbReference type="SUPFAM" id="SSF101576">
    <property type="entry name" value="Supernatant protein factor (SPF), C-terminal domain"/>
    <property type="match status" value="1"/>
</dbReference>
<dbReference type="PROSITE" id="PS50866">
    <property type="entry name" value="GOLD"/>
    <property type="match status" value="1"/>
</dbReference>
<gene>
    <name type="primary">ERP2</name>
    <name type="ordered locus">YAL007C</name>
    <name type="ORF">FUN54</name>
</gene>
<keyword id="KW-0256">Endoplasmic reticulum</keyword>
<keyword id="KW-0931">ER-Golgi transport</keyword>
<keyword id="KW-0472">Membrane</keyword>
<keyword id="KW-0653">Protein transport</keyword>
<keyword id="KW-1185">Reference proteome</keyword>
<keyword id="KW-0732">Signal</keyword>
<keyword id="KW-0812">Transmembrane</keyword>
<keyword id="KW-1133">Transmembrane helix</keyword>
<keyword id="KW-0813">Transport</keyword>